<name>ARGDC_CALMQ</name>
<gene>
    <name type="ordered locus">Cmaq_0451</name>
</gene>
<reference key="1">
    <citation type="submission" date="2007-10" db="EMBL/GenBank/DDBJ databases">
        <title>Complete sequence of Caldivirga maquilingensis IC-167.</title>
        <authorList>
            <consortium name="US DOE Joint Genome Institute"/>
            <person name="Copeland A."/>
            <person name="Lucas S."/>
            <person name="Lapidus A."/>
            <person name="Barry K."/>
            <person name="Glavina del Rio T."/>
            <person name="Dalin E."/>
            <person name="Tice H."/>
            <person name="Pitluck S."/>
            <person name="Saunders E."/>
            <person name="Brettin T."/>
            <person name="Bruce D."/>
            <person name="Detter J.C."/>
            <person name="Han C."/>
            <person name="Schmutz J."/>
            <person name="Larimer F."/>
            <person name="Land M."/>
            <person name="Hauser L."/>
            <person name="Kyrpides N."/>
            <person name="Ivanova N."/>
            <person name="Biddle J.F."/>
            <person name="Zhang Z."/>
            <person name="Fitz-Gibbon S.T."/>
            <person name="Lowe T.M."/>
            <person name="Saltikov C."/>
            <person name="House C.H."/>
            <person name="Richardson P."/>
        </authorList>
    </citation>
    <scope>NUCLEOTIDE SEQUENCE [LARGE SCALE GENOMIC DNA]</scope>
    <source>
        <strain>ATCC 700844 / DSM 13496 / JCM 10307 / IC-167</strain>
    </source>
</reference>
<proteinExistence type="inferred from homology"/>
<evidence type="ECO:0000255" key="1">
    <source>
        <dbReference type="HAMAP-Rule" id="MF_01298"/>
    </source>
</evidence>
<sequence>MLQQQESPIPRLGVGEEGVVGRHVFGEVWGVNDKLLQDDEYLKNLVIKAAEVANMHLVDVKVWRFGGGDKGGVSVIALVLESHIAIHTWPAYNYATIDVYTCGEHSRPWDAYDYIIKQLNPKTFTKTIVDRSSK</sequence>
<accession>A8MBV3</accession>
<keyword id="KW-0068">Autocatalytic cleavage</keyword>
<keyword id="KW-0210">Decarboxylase</keyword>
<keyword id="KW-0456">Lyase</keyword>
<keyword id="KW-0620">Polyamine biosynthesis</keyword>
<keyword id="KW-0670">Pyruvate</keyword>
<keyword id="KW-1185">Reference proteome</keyword>
<keyword id="KW-0704">Schiff base</keyword>
<keyword id="KW-0865">Zymogen</keyword>
<protein>
    <recommendedName>
        <fullName evidence="1">Arginine decarboxylase proenzyme</fullName>
        <shortName evidence="1">ADC</shortName>
        <shortName evidence="1">ArgDC</shortName>
        <ecNumber evidence="1">4.1.1.19</ecNumber>
    </recommendedName>
    <alternativeName>
        <fullName evidence="1">Pyruvoyl-dependent arginine decarboxylase</fullName>
    </alternativeName>
    <component>
        <recommendedName>
            <fullName evidence="1">Arginine decarboxylase beta chain</fullName>
        </recommendedName>
    </component>
    <component>
        <recommendedName>
            <fullName evidence="1">Arginine decarboxylase alpha chain</fullName>
        </recommendedName>
    </component>
</protein>
<comment type="function">
    <text evidence="1">Specifically catalyzes the decarboxylation of L-arginine to agmatine. Has no S-adenosylmethionine decarboxylase (AdoMetDC) activity.</text>
</comment>
<comment type="catalytic activity">
    <reaction evidence="1">
        <text>L-arginine + H(+) = agmatine + CO2</text>
        <dbReference type="Rhea" id="RHEA:17641"/>
        <dbReference type="ChEBI" id="CHEBI:15378"/>
        <dbReference type="ChEBI" id="CHEBI:16526"/>
        <dbReference type="ChEBI" id="CHEBI:32682"/>
        <dbReference type="ChEBI" id="CHEBI:58145"/>
        <dbReference type="EC" id="4.1.1.19"/>
    </reaction>
</comment>
<comment type="cofactor">
    <cofactor evidence="1">
        <name>pyruvate</name>
        <dbReference type="ChEBI" id="CHEBI:15361"/>
    </cofactor>
    <text evidence="1">Binds 1 pyruvoyl group covalently per subunit.</text>
</comment>
<comment type="pathway">
    <text evidence="1">Amine and polyamine biosynthesis; agmatine biosynthesis; agmatine from L-arginine: step 1/1.</text>
</comment>
<comment type="subunit">
    <text evidence="1">Heterooctamer of four alpha and four beta chains arranged as a tetramer of alpha/beta heterodimers.</text>
</comment>
<comment type="PTM">
    <text evidence="1">Is synthesized initially as an inactive proenzyme. Formation of the active enzyme involves a self-maturation process in which the active site pyruvoyl group is generated from an internal serine residue via an autocatalytic post-translational modification. Two non-identical subunits are generated from the proenzyme in this reaction, and the pyruvate is formed at the N-terminus of the alpha chain, which is derived from the carboxyl end of the proenzyme. The post-translation cleavage follows an unusual pathway, termed non-hydrolytic serinolysis, in which the side chain hydroxyl group of the serine supplies its oxygen atom to form the C-terminus of the beta chain, while the remainder of the serine residue undergoes an oxidative deamination to produce ammonia and the pyruvoyl group blocking the N-terminus of the alpha chain.</text>
</comment>
<comment type="similarity">
    <text evidence="1">Belongs to the prokaryotic AdoMetDC family. Type 1 subfamily.</text>
</comment>
<organism>
    <name type="scientific">Caldivirga maquilingensis (strain ATCC 700844 / DSM 13496 / JCM 10307 / IC-167)</name>
    <dbReference type="NCBI Taxonomy" id="397948"/>
    <lineage>
        <taxon>Archaea</taxon>
        <taxon>Thermoproteota</taxon>
        <taxon>Thermoprotei</taxon>
        <taxon>Thermoproteales</taxon>
        <taxon>Thermoproteaceae</taxon>
        <taxon>Caldivirga</taxon>
    </lineage>
</organism>
<feature type="chain" id="PRO_0000364111" description="Arginine decarboxylase beta chain" evidence="1">
    <location>
        <begin position="1"/>
        <end position="81"/>
    </location>
</feature>
<feature type="chain" id="PRO_0000364112" description="Arginine decarboxylase alpha chain" evidence="1">
    <location>
        <begin position="82"/>
        <end position="134"/>
    </location>
</feature>
<feature type="active site" description="Schiff-base intermediate with substrate; via pyruvic acid" evidence="1">
    <location>
        <position position="82"/>
    </location>
</feature>
<feature type="active site" description="Proton acceptor; for processing activity" evidence="1">
    <location>
        <position position="87"/>
    </location>
</feature>
<feature type="active site" description="Proton donor; for catalytic activity" evidence="1">
    <location>
        <position position="102"/>
    </location>
</feature>
<feature type="site" description="Cleavage (non-hydrolytic); by autolysis" evidence="1">
    <location>
        <begin position="81"/>
        <end position="82"/>
    </location>
</feature>
<feature type="modified residue" description="Pyruvic acid (Ser); by autocatalysis" evidence="1">
    <location>
        <position position="82"/>
    </location>
</feature>
<dbReference type="EC" id="4.1.1.19" evidence="1"/>
<dbReference type="EMBL" id="CP000852">
    <property type="protein sequence ID" value="ABW01296.1"/>
    <property type="molecule type" value="Genomic_DNA"/>
</dbReference>
<dbReference type="RefSeq" id="WP_012185516.1">
    <property type="nucleotide sequence ID" value="NC_009954.1"/>
</dbReference>
<dbReference type="SMR" id="A8MBV3"/>
<dbReference type="STRING" id="397948.Cmaq_0451"/>
<dbReference type="GeneID" id="5709779"/>
<dbReference type="KEGG" id="cma:Cmaq_0451"/>
<dbReference type="eggNOG" id="arCOG00279">
    <property type="taxonomic scope" value="Archaea"/>
</dbReference>
<dbReference type="HOGENOM" id="CLU_125470_2_1_2"/>
<dbReference type="OrthoDB" id="114016at2157"/>
<dbReference type="UniPathway" id="UPA00186">
    <property type="reaction ID" value="UER00284"/>
</dbReference>
<dbReference type="Proteomes" id="UP000001137">
    <property type="component" value="Chromosome"/>
</dbReference>
<dbReference type="GO" id="GO:0005829">
    <property type="term" value="C:cytosol"/>
    <property type="evidence" value="ECO:0007669"/>
    <property type="project" value="TreeGrafter"/>
</dbReference>
<dbReference type="GO" id="GO:0004014">
    <property type="term" value="F:adenosylmethionine decarboxylase activity"/>
    <property type="evidence" value="ECO:0007669"/>
    <property type="project" value="InterPro"/>
</dbReference>
<dbReference type="GO" id="GO:0008792">
    <property type="term" value="F:arginine decarboxylase activity"/>
    <property type="evidence" value="ECO:0007669"/>
    <property type="project" value="UniProtKB-UniRule"/>
</dbReference>
<dbReference type="GO" id="GO:0006527">
    <property type="term" value="P:arginine catabolic process"/>
    <property type="evidence" value="ECO:0007669"/>
    <property type="project" value="UniProtKB-UniRule"/>
</dbReference>
<dbReference type="GO" id="GO:0008295">
    <property type="term" value="P:spermidine biosynthetic process"/>
    <property type="evidence" value="ECO:0007669"/>
    <property type="project" value="InterPro"/>
</dbReference>
<dbReference type="Gene3D" id="3.60.90.10">
    <property type="entry name" value="S-adenosylmethionine decarboxylase"/>
    <property type="match status" value="1"/>
</dbReference>
<dbReference type="HAMAP" id="MF_00464">
    <property type="entry name" value="AdoMetDC_1"/>
    <property type="match status" value="1"/>
</dbReference>
<dbReference type="HAMAP" id="MF_01298">
    <property type="entry name" value="ArgDC"/>
    <property type="match status" value="1"/>
</dbReference>
<dbReference type="InterPro" id="IPR003826">
    <property type="entry name" value="AdoMetDC_fam_prok"/>
</dbReference>
<dbReference type="InterPro" id="IPR027549">
    <property type="entry name" value="ArgDC"/>
</dbReference>
<dbReference type="InterPro" id="IPR016067">
    <property type="entry name" value="S-AdoMet_deCO2ase_core"/>
</dbReference>
<dbReference type="InterPro" id="IPR017716">
    <property type="entry name" value="S-AdoMet_deCOase_pro-enz"/>
</dbReference>
<dbReference type="NCBIfam" id="TIGR03330">
    <property type="entry name" value="SAM_DCase_Bsu"/>
    <property type="match status" value="1"/>
</dbReference>
<dbReference type="PANTHER" id="PTHR33866">
    <property type="entry name" value="S-ADENOSYLMETHIONINE DECARBOXYLASE PROENZYME"/>
    <property type="match status" value="1"/>
</dbReference>
<dbReference type="PANTHER" id="PTHR33866:SF2">
    <property type="entry name" value="S-ADENOSYLMETHIONINE DECARBOXYLASE PROENZYME"/>
    <property type="match status" value="1"/>
</dbReference>
<dbReference type="Pfam" id="PF02675">
    <property type="entry name" value="AdoMet_dc"/>
    <property type="match status" value="1"/>
</dbReference>
<dbReference type="SUPFAM" id="SSF56276">
    <property type="entry name" value="S-adenosylmethionine decarboxylase"/>
    <property type="match status" value="1"/>
</dbReference>